<dbReference type="EMBL" id="CP001087">
    <property type="protein sequence ID" value="ACN16179.1"/>
    <property type="molecule type" value="Genomic_DNA"/>
</dbReference>
<dbReference type="SMR" id="C0QKT9"/>
<dbReference type="STRING" id="177437.HRM2_30960"/>
<dbReference type="KEGG" id="dat:HRM2_30960"/>
<dbReference type="eggNOG" id="COG0335">
    <property type="taxonomic scope" value="Bacteria"/>
</dbReference>
<dbReference type="HOGENOM" id="CLU_103507_2_2_7"/>
<dbReference type="OrthoDB" id="9803541at2"/>
<dbReference type="Proteomes" id="UP000000442">
    <property type="component" value="Chromosome"/>
</dbReference>
<dbReference type="GO" id="GO:0022625">
    <property type="term" value="C:cytosolic large ribosomal subunit"/>
    <property type="evidence" value="ECO:0007669"/>
    <property type="project" value="TreeGrafter"/>
</dbReference>
<dbReference type="GO" id="GO:0003735">
    <property type="term" value="F:structural constituent of ribosome"/>
    <property type="evidence" value="ECO:0007669"/>
    <property type="project" value="InterPro"/>
</dbReference>
<dbReference type="GO" id="GO:0006412">
    <property type="term" value="P:translation"/>
    <property type="evidence" value="ECO:0007669"/>
    <property type="project" value="UniProtKB-UniRule"/>
</dbReference>
<dbReference type="FunFam" id="2.30.30.790:FF:000001">
    <property type="entry name" value="50S ribosomal protein L19"/>
    <property type="match status" value="1"/>
</dbReference>
<dbReference type="Gene3D" id="2.30.30.790">
    <property type="match status" value="1"/>
</dbReference>
<dbReference type="HAMAP" id="MF_00402">
    <property type="entry name" value="Ribosomal_bL19"/>
    <property type="match status" value="1"/>
</dbReference>
<dbReference type="InterPro" id="IPR001857">
    <property type="entry name" value="Ribosomal_bL19"/>
</dbReference>
<dbReference type="InterPro" id="IPR018257">
    <property type="entry name" value="Ribosomal_bL19_CS"/>
</dbReference>
<dbReference type="InterPro" id="IPR038657">
    <property type="entry name" value="Ribosomal_bL19_sf"/>
</dbReference>
<dbReference type="InterPro" id="IPR008991">
    <property type="entry name" value="Translation_prot_SH3-like_sf"/>
</dbReference>
<dbReference type="NCBIfam" id="TIGR01024">
    <property type="entry name" value="rplS_bact"/>
    <property type="match status" value="1"/>
</dbReference>
<dbReference type="PANTHER" id="PTHR15680:SF9">
    <property type="entry name" value="LARGE RIBOSOMAL SUBUNIT PROTEIN BL19M"/>
    <property type="match status" value="1"/>
</dbReference>
<dbReference type="PANTHER" id="PTHR15680">
    <property type="entry name" value="RIBOSOMAL PROTEIN L19"/>
    <property type="match status" value="1"/>
</dbReference>
<dbReference type="Pfam" id="PF01245">
    <property type="entry name" value="Ribosomal_L19"/>
    <property type="match status" value="1"/>
</dbReference>
<dbReference type="PIRSF" id="PIRSF002191">
    <property type="entry name" value="Ribosomal_L19"/>
    <property type="match status" value="1"/>
</dbReference>
<dbReference type="PRINTS" id="PR00061">
    <property type="entry name" value="RIBOSOMALL19"/>
</dbReference>
<dbReference type="SUPFAM" id="SSF50104">
    <property type="entry name" value="Translation proteins SH3-like domain"/>
    <property type="match status" value="1"/>
</dbReference>
<dbReference type="PROSITE" id="PS01015">
    <property type="entry name" value="RIBOSOMAL_L19"/>
    <property type="match status" value="1"/>
</dbReference>
<proteinExistence type="inferred from homology"/>
<gene>
    <name evidence="1" type="primary">rplS</name>
    <name type="ordered locus">HRM2_30960</name>
</gene>
<accession>C0QKT9</accession>
<name>RL19_DESAH</name>
<protein>
    <recommendedName>
        <fullName evidence="1">Large ribosomal subunit protein bL19</fullName>
    </recommendedName>
    <alternativeName>
        <fullName evidence="2">50S ribosomal protein L19</fullName>
    </alternativeName>
</protein>
<organism>
    <name type="scientific">Desulforapulum autotrophicum (strain ATCC 43914 / DSM 3382 / VKM B-1955 / HRM2)</name>
    <name type="common">Desulfobacterium autotrophicum</name>
    <dbReference type="NCBI Taxonomy" id="177437"/>
    <lineage>
        <taxon>Bacteria</taxon>
        <taxon>Pseudomonadati</taxon>
        <taxon>Thermodesulfobacteriota</taxon>
        <taxon>Desulfobacteria</taxon>
        <taxon>Desulfobacterales</taxon>
        <taxon>Desulfobacteraceae</taxon>
        <taxon>Desulforapulum</taxon>
    </lineage>
</organism>
<sequence>MNIIDQLEQEQLRLDMPDFRAGDAIKVHVKIREGEKERIQIFAGVVIKKTKGLACARFTVRKISGGIGVERIFPLNSPSIDKIEVVTRGRVRRSKIYYLRNLRGKAARIKERRMA</sequence>
<feature type="chain" id="PRO_1000205885" description="Large ribosomal subunit protein bL19">
    <location>
        <begin position="1"/>
        <end position="115"/>
    </location>
</feature>
<comment type="function">
    <text evidence="1">This protein is located at the 30S-50S ribosomal subunit interface and may play a role in the structure and function of the aminoacyl-tRNA binding site.</text>
</comment>
<comment type="similarity">
    <text evidence="1">Belongs to the bacterial ribosomal protein bL19 family.</text>
</comment>
<evidence type="ECO:0000255" key="1">
    <source>
        <dbReference type="HAMAP-Rule" id="MF_00402"/>
    </source>
</evidence>
<evidence type="ECO:0000305" key="2"/>
<reference key="1">
    <citation type="journal article" date="2009" name="Environ. Microbiol.">
        <title>Genome sequence of Desulfobacterium autotrophicum HRM2, a marine sulfate reducer oxidizing organic carbon completely to carbon dioxide.</title>
        <authorList>
            <person name="Strittmatter A.W."/>
            <person name="Liesegang H."/>
            <person name="Rabus R."/>
            <person name="Decker I."/>
            <person name="Amann J."/>
            <person name="Andres S."/>
            <person name="Henne A."/>
            <person name="Fricke W.F."/>
            <person name="Martinez-Arias R."/>
            <person name="Bartels D."/>
            <person name="Goesmann A."/>
            <person name="Krause L."/>
            <person name="Puehler A."/>
            <person name="Klenk H.P."/>
            <person name="Richter M."/>
            <person name="Schuler M."/>
            <person name="Gloeckner F.O."/>
            <person name="Meyerdierks A."/>
            <person name="Gottschalk G."/>
            <person name="Amann R."/>
        </authorList>
    </citation>
    <scope>NUCLEOTIDE SEQUENCE [LARGE SCALE GENOMIC DNA]</scope>
    <source>
        <strain>ATCC 43914 / DSM 3382 / VKM B-1955 / HRM2</strain>
    </source>
</reference>
<keyword id="KW-1185">Reference proteome</keyword>
<keyword id="KW-0687">Ribonucleoprotein</keyword>
<keyword id="KW-0689">Ribosomal protein</keyword>